<reference key="1">
    <citation type="journal article" date="1999" name="Genomics">
        <title>Characterization of a novel chromo domain gene in Xp22.3 with homology to Drosophila msl-3.</title>
        <authorList>
            <person name="Prakash S.K."/>
            <person name="Van den Veyver I.B."/>
            <person name="Franco B."/>
            <person name="Volta M."/>
            <person name="Ballabio A."/>
            <person name="Zoghbi H.Y."/>
        </authorList>
    </citation>
    <scope>NUCLEOTIDE SEQUENCE [MRNA] (ISOFORM 1)</scope>
    <scope>TISSUE SPECIFICITY</scope>
    <scope>ALTERNATIVE SPLICING (ISOFORM 2)</scope>
</reference>
<reference key="2">
    <citation type="journal article" date="2004" name="Nat. Genet.">
        <title>Complete sequencing and characterization of 21,243 full-length human cDNAs.</title>
        <authorList>
            <person name="Ota T."/>
            <person name="Suzuki Y."/>
            <person name="Nishikawa T."/>
            <person name="Otsuki T."/>
            <person name="Sugiyama T."/>
            <person name="Irie R."/>
            <person name="Wakamatsu A."/>
            <person name="Hayashi K."/>
            <person name="Sato H."/>
            <person name="Nagai K."/>
            <person name="Kimura K."/>
            <person name="Makita H."/>
            <person name="Sekine M."/>
            <person name="Obayashi M."/>
            <person name="Nishi T."/>
            <person name="Shibahara T."/>
            <person name="Tanaka T."/>
            <person name="Ishii S."/>
            <person name="Yamamoto J."/>
            <person name="Saito K."/>
            <person name="Kawai Y."/>
            <person name="Isono Y."/>
            <person name="Nakamura Y."/>
            <person name="Nagahari K."/>
            <person name="Murakami K."/>
            <person name="Yasuda T."/>
            <person name="Iwayanagi T."/>
            <person name="Wagatsuma M."/>
            <person name="Shiratori A."/>
            <person name="Sudo H."/>
            <person name="Hosoiri T."/>
            <person name="Kaku Y."/>
            <person name="Kodaira H."/>
            <person name="Kondo H."/>
            <person name="Sugawara M."/>
            <person name="Takahashi M."/>
            <person name="Kanda K."/>
            <person name="Yokoi T."/>
            <person name="Furuya T."/>
            <person name="Kikkawa E."/>
            <person name="Omura Y."/>
            <person name="Abe K."/>
            <person name="Kamihara K."/>
            <person name="Katsuta N."/>
            <person name="Sato K."/>
            <person name="Tanikawa M."/>
            <person name="Yamazaki M."/>
            <person name="Ninomiya K."/>
            <person name="Ishibashi T."/>
            <person name="Yamashita H."/>
            <person name="Murakawa K."/>
            <person name="Fujimori K."/>
            <person name="Tanai H."/>
            <person name="Kimata M."/>
            <person name="Watanabe M."/>
            <person name="Hiraoka S."/>
            <person name="Chiba Y."/>
            <person name="Ishida S."/>
            <person name="Ono Y."/>
            <person name="Takiguchi S."/>
            <person name="Watanabe S."/>
            <person name="Yosida M."/>
            <person name="Hotuta T."/>
            <person name="Kusano J."/>
            <person name="Kanehori K."/>
            <person name="Takahashi-Fujii A."/>
            <person name="Hara H."/>
            <person name="Tanase T.-O."/>
            <person name="Nomura Y."/>
            <person name="Togiya S."/>
            <person name="Komai F."/>
            <person name="Hara R."/>
            <person name="Takeuchi K."/>
            <person name="Arita M."/>
            <person name="Imose N."/>
            <person name="Musashino K."/>
            <person name="Yuuki H."/>
            <person name="Oshima A."/>
            <person name="Sasaki N."/>
            <person name="Aotsuka S."/>
            <person name="Yoshikawa Y."/>
            <person name="Matsunawa H."/>
            <person name="Ichihara T."/>
            <person name="Shiohata N."/>
            <person name="Sano S."/>
            <person name="Moriya S."/>
            <person name="Momiyama H."/>
            <person name="Satoh N."/>
            <person name="Takami S."/>
            <person name="Terashima Y."/>
            <person name="Suzuki O."/>
            <person name="Nakagawa S."/>
            <person name="Senoh A."/>
            <person name="Mizoguchi H."/>
            <person name="Goto Y."/>
            <person name="Shimizu F."/>
            <person name="Wakebe H."/>
            <person name="Hishigaki H."/>
            <person name="Watanabe T."/>
            <person name="Sugiyama A."/>
            <person name="Takemoto M."/>
            <person name="Kawakami B."/>
            <person name="Yamazaki M."/>
            <person name="Watanabe K."/>
            <person name="Kumagai A."/>
            <person name="Itakura S."/>
            <person name="Fukuzumi Y."/>
            <person name="Fujimori Y."/>
            <person name="Komiyama M."/>
            <person name="Tashiro H."/>
            <person name="Tanigami A."/>
            <person name="Fujiwara T."/>
            <person name="Ono T."/>
            <person name="Yamada K."/>
            <person name="Fujii Y."/>
            <person name="Ozaki K."/>
            <person name="Hirao M."/>
            <person name="Ohmori Y."/>
            <person name="Kawabata A."/>
            <person name="Hikiji T."/>
            <person name="Kobatake N."/>
            <person name="Inagaki H."/>
            <person name="Ikema Y."/>
            <person name="Okamoto S."/>
            <person name="Okitani R."/>
            <person name="Kawakami T."/>
            <person name="Noguchi S."/>
            <person name="Itoh T."/>
            <person name="Shigeta K."/>
            <person name="Senba T."/>
            <person name="Matsumura K."/>
            <person name="Nakajima Y."/>
            <person name="Mizuno T."/>
            <person name="Morinaga M."/>
            <person name="Sasaki M."/>
            <person name="Togashi T."/>
            <person name="Oyama M."/>
            <person name="Hata H."/>
            <person name="Watanabe M."/>
            <person name="Komatsu T."/>
            <person name="Mizushima-Sugano J."/>
            <person name="Satoh T."/>
            <person name="Shirai Y."/>
            <person name="Takahashi Y."/>
            <person name="Nakagawa K."/>
            <person name="Okumura K."/>
            <person name="Nagase T."/>
            <person name="Nomura N."/>
            <person name="Kikuchi H."/>
            <person name="Masuho Y."/>
            <person name="Yamashita R."/>
            <person name="Nakai K."/>
            <person name="Yada T."/>
            <person name="Nakamura Y."/>
            <person name="Ohara O."/>
            <person name="Isogai T."/>
            <person name="Sugano S."/>
        </authorList>
    </citation>
    <scope>NUCLEOTIDE SEQUENCE [LARGE SCALE MRNA] (ISOFORMS 3; 4; 5 AND 6)</scope>
    <scope>VARIANT THR-2</scope>
    <source>
        <tissue>Amygdala</tissue>
        <tissue>Brain</tissue>
        <tissue>Hepatoma</tissue>
    </source>
</reference>
<reference key="3">
    <citation type="journal article" date="2005" name="Nature">
        <title>The DNA sequence of the human X chromosome.</title>
        <authorList>
            <person name="Ross M.T."/>
            <person name="Grafham D.V."/>
            <person name="Coffey A.J."/>
            <person name="Scherer S."/>
            <person name="McLay K."/>
            <person name="Muzny D."/>
            <person name="Platzer M."/>
            <person name="Howell G.R."/>
            <person name="Burrows C."/>
            <person name="Bird C.P."/>
            <person name="Frankish A."/>
            <person name="Lovell F.L."/>
            <person name="Howe K.L."/>
            <person name="Ashurst J.L."/>
            <person name="Fulton R.S."/>
            <person name="Sudbrak R."/>
            <person name="Wen G."/>
            <person name="Jones M.C."/>
            <person name="Hurles M.E."/>
            <person name="Andrews T.D."/>
            <person name="Scott C.E."/>
            <person name="Searle S."/>
            <person name="Ramser J."/>
            <person name="Whittaker A."/>
            <person name="Deadman R."/>
            <person name="Carter N.P."/>
            <person name="Hunt S.E."/>
            <person name="Chen R."/>
            <person name="Cree A."/>
            <person name="Gunaratne P."/>
            <person name="Havlak P."/>
            <person name="Hodgson A."/>
            <person name="Metzker M.L."/>
            <person name="Richards S."/>
            <person name="Scott G."/>
            <person name="Steffen D."/>
            <person name="Sodergren E."/>
            <person name="Wheeler D.A."/>
            <person name="Worley K.C."/>
            <person name="Ainscough R."/>
            <person name="Ambrose K.D."/>
            <person name="Ansari-Lari M.A."/>
            <person name="Aradhya S."/>
            <person name="Ashwell R.I."/>
            <person name="Babbage A.K."/>
            <person name="Bagguley C.L."/>
            <person name="Ballabio A."/>
            <person name="Banerjee R."/>
            <person name="Barker G.E."/>
            <person name="Barlow K.F."/>
            <person name="Barrett I.P."/>
            <person name="Bates K.N."/>
            <person name="Beare D.M."/>
            <person name="Beasley H."/>
            <person name="Beasley O."/>
            <person name="Beck A."/>
            <person name="Bethel G."/>
            <person name="Blechschmidt K."/>
            <person name="Brady N."/>
            <person name="Bray-Allen S."/>
            <person name="Bridgeman A.M."/>
            <person name="Brown A.J."/>
            <person name="Brown M.J."/>
            <person name="Bonnin D."/>
            <person name="Bruford E.A."/>
            <person name="Buhay C."/>
            <person name="Burch P."/>
            <person name="Burford D."/>
            <person name="Burgess J."/>
            <person name="Burrill W."/>
            <person name="Burton J."/>
            <person name="Bye J.M."/>
            <person name="Carder C."/>
            <person name="Carrel L."/>
            <person name="Chako J."/>
            <person name="Chapman J.C."/>
            <person name="Chavez D."/>
            <person name="Chen E."/>
            <person name="Chen G."/>
            <person name="Chen Y."/>
            <person name="Chen Z."/>
            <person name="Chinault C."/>
            <person name="Ciccodicola A."/>
            <person name="Clark S.Y."/>
            <person name="Clarke G."/>
            <person name="Clee C.M."/>
            <person name="Clegg S."/>
            <person name="Clerc-Blankenburg K."/>
            <person name="Clifford K."/>
            <person name="Cobley V."/>
            <person name="Cole C.G."/>
            <person name="Conquer J.S."/>
            <person name="Corby N."/>
            <person name="Connor R.E."/>
            <person name="David R."/>
            <person name="Davies J."/>
            <person name="Davis C."/>
            <person name="Davis J."/>
            <person name="Delgado O."/>
            <person name="Deshazo D."/>
            <person name="Dhami P."/>
            <person name="Ding Y."/>
            <person name="Dinh H."/>
            <person name="Dodsworth S."/>
            <person name="Draper H."/>
            <person name="Dugan-Rocha S."/>
            <person name="Dunham A."/>
            <person name="Dunn M."/>
            <person name="Durbin K.J."/>
            <person name="Dutta I."/>
            <person name="Eades T."/>
            <person name="Ellwood M."/>
            <person name="Emery-Cohen A."/>
            <person name="Errington H."/>
            <person name="Evans K.L."/>
            <person name="Faulkner L."/>
            <person name="Francis F."/>
            <person name="Frankland J."/>
            <person name="Fraser A.E."/>
            <person name="Galgoczy P."/>
            <person name="Gilbert J."/>
            <person name="Gill R."/>
            <person name="Gloeckner G."/>
            <person name="Gregory S.G."/>
            <person name="Gribble S."/>
            <person name="Griffiths C."/>
            <person name="Grocock R."/>
            <person name="Gu Y."/>
            <person name="Gwilliam R."/>
            <person name="Hamilton C."/>
            <person name="Hart E.A."/>
            <person name="Hawes A."/>
            <person name="Heath P.D."/>
            <person name="Heitmann K."/>
            <person name="Hennig S."/>
            <person name="Hernandez J."/>
            <person name="Hinzmann B."/>
            <person name="Ho S."/>
            <person name="Hoffs M."/>
            <person name="Howden P.J."/>
            <person name="Huckle E.J."/>
            <person name="Hume J."/>
            <person name="Hunt P.J."/>
            <person name="Hunt A.R."/>
            <person name="Isherwood J."/>
            <person name="Jacob L."/>
            <person name="Johnson D."/>
            <person name="Jones S."/>
            <person name="de Jong P.J."/>
            <person name="Joseph S.S."/>
            <person name="Keenan S."/>
            <person name="Kelly S."/>
            <person name="Kershaw J.K."/>
            <person name="Khan Z."/>
            <person name="Kioschis P."/>
            <person name="Klages S."/>
            <person name="Knights A.J."/>
            <person name="Kosiura A."/>
            <person name="Kovar-Smith C."/>
            <person name="Laird G.K."/>
            <person name="Langford C."/>
            <person name="Lawlor S."/>
            <person name="Leversha M."/>
            <person name="Lewis L."/>
            <person name="Liu W."/>
            <person name="Lloyd C."/>
            <person name="Lloyd D.M."/>
            <person name="Loulseged H."/>
            <person name="Loveland J.E."/>
            <person name="Lovell J.D."/>
            <person name="Lozado R."/>
            <person name="Lu J."/>
            <person name="Lyne R."/>
            <person name="Ma J."/>
            <person name="Maheshwari M."/>
            <person name="Matthews L.H."/>
            <person name="McDowall J."/>
            <person name="McLaren S."/>
            <person name="McMurray A."/>
            <person name="Meidl P."/>
            <person name="Meitinger T."/>
            <person name="Milne S."/>
            <person name="Miner G."/>
            <person name="Mistry S.L."/>
            <person name="Morgan M."/>
            <person name="Morris S."/>
            <person name="Mueller I."/>
            <person name="Mullikin J.C."/>
            <person name="Nguyen N."/>
            <person name="Nordsiek G."/>
            <person name="Nyakatura G."/>
            <person name="O'dell C.N."/>
            <person name="Okwuonu G."/>
            <person name="Palmer S."/>
            <person name="Pandian R."/>
            <person name="Parker D."/>
            <person name="Parrish J."/>
            <person name="Pasternak S."/>
            <person name="Patel D."/>
            <person name="Pearce A.V."/>
            <person name="Pearson D.M."/>
            <person name="Pelan S.E."/>
            <person name="Perez L."/>
            <person name="Porter K.M."/>
            <person name="Ramsey Y."/>
            <person name="Reichwald K."/>
            <person name="Rhodes S."/>
            <person name="Ridler K.A."/>
            <person name="Schlessinger D."/>
            <person name="Schueler M.G."/>
            <person name="Sehra H.K."/>
            <person name="Shaw-Smith C."/>
            <person name="Shen H."/>
            <person name="Sheridan E.M."/>
            <person name="Shownkeen R."/>
            <person name="Skuce C.D."/>
            <person name="Smith M.L."/>
            <person name="Sotheran E.C."/>
            <person name="Steingruber H.E."/>
            <person name="Steward C.A."/>
            <person name="Storey R."/>
            <person name="Swann R.M."/>
            <person name="Swarbreck D."/>
            <person name="Tabor P.E."/>
            <person name="Taudien S."/>
            <person name="Taylor T."/>
            <person name="Teague B."/>
            <person name="Thomas K."/>
            <person name="Thorpe A."/>
            <person name="Timms K."/>
            <person name="Tracey A."/>
            <person name="Trevanion S."/>
            <person name="Tromans A.C."/>
            <person name="d'Urso M."/>
            <person name="Verduzco D."/>
            <person name="Villasana D."/>
            <person name="Waldron L."/>
            <person name="Wall M."/>
            <person name="Wang Q."/>
            <person name="Warren J."/>
            <person name="Warry G.L."/>
            <person name="Wei X."/>
            <person name="West A."/>
            <person name="Whitehead S.L."/>
            <person name="Whiteley M.N."/>
            <person name="Wilkinson J.E."/>
            <person name="Willey D.L."/>
            <person name="Williams G."/>
            <person name="Williams L."/>
            <person name="Williamson A."/>
            <person name="Williamson H."/>
            <person name="Wilming L."/>
            <person name="Woodmansey R.L."/>
            <person name="Wray P.W."/>
            <person name="Yen J."/>
            <person name="Zhang J."/>
            <person name="Zhou J."/>
            <person name="Zoghbi H."/>
            <person name="Zorilla S."/>
            <person name="Buck D."/>
            <person name="Reinhardt R."/>
            <person name="Poustka A."/>
            <person name="Rosenthal A."/>
            <person name="Lehrach H."/>
            <person name="Meindl A."/>
            <person name="Minx P.J."/>
            <person name="Hillier L.W."/>
            <person name="Willard H.F."/>
            <person name="Wilson R.K."/>
            <person name="Waterston R.H."/>
            <person name="Rice C.M."/>
            <person name="Vaudin M."/>
            <person name="Coulson A."/>
            <person name="Nelson D.L."/>
            <person name="Weinstock G."/>
            <person name="Sulston J.E."/>
            <person name="Durbin R.M."/>
            <person name="Hubbard T."/>
            <person name="Gibbs R.A."/>
            <person name="Beck S."/>
            <person name="Rogers J."/>
            <person name="Bentley D.R."/>
        </authorList>
    </citation>
    <scope>NUCLEOTIDE SEQUENCE [LARGE SCALE GENOMIC DNA]</scope>
</reference>
<reference key="4">
    <citation type="submission" date="2005-07" db="EMBL/GenBank/DDBJ databases">
        <authorList>
            <person name="Mural R.J."/>
            <person name="Istrail S."/>
            <person name="Sutton G."/>
            <person name="Florea L."/>
            <person name="Halpern A.L."/>
            <person name="Mobarry C.M."/>
            <person name="Lippert R."/>
            <person name="Walenz B."/>
            <person name="Shatkay H."/>
            <person name="Dew I."/>
            <person name="Miller J.R."/>
            <person name="Flanigan M.J."/>
            <person name="Edwards N.J."/>
            <person name="Bolanos R."/>
            <person name="Fasulo D."/>
            <person name="Halldorsson B.V."/>
            <person name="Hannenhalli S."/>
            <person name="Turner R."/>
            <person name="Yooseph S."/>
            <person name="Lu F."/>
            <person name="Nusskern D.R."/>
            <person name="Shue B.C."/>
            <person name="Zheng X.H."/>
            <person name="Zhong F."/>
            <person name="Delcher A.L."/>
            <person name="Huson D.H."/>
            <person name="Kravitz S.A."/>
            <person name="Mouchard L."/>
            <person name="Reinert K."/>
            <person name="Remington K.A."/>
            <person name="Clark A.G."/>
            <person name="Waterman M.S."/>
            <person name="Eichler E.E."/>
            <person name="Adams M.D."/>
            <person name="Hunkapiller M.W."/>
            <person name="Myers E.W."/>
            <person name="Venter J.C."/>
        </authorList>
    </citation>
    <scope>NUCLEOTIDE SEQUENCE [LARGE SCALE GENOMIC DNA]</scope>
</reference>
<reference key="5">
    <citation type="journal article" date="2004" name="Genome Res.">
        <title>The status, quality, and expansion of the NIH full-length cDNA project: the Mammalian Gene Collection (MGC).</title>
        <authorList>
            <consortium name="The MGC Project Team"/>
        </authorList>
    </citation>
    <scope>NUCLEOTIDE SEQUENCE [LARGE SCALE MRNA] (ISOFORM 1)</scope>
    <source>
        <tissue>Brain</tissue>
    </source>
</reference>
<reference key="6">
    <citation type="journal article" date="2007" name="BMC Genomics">
        <title>The full-ORF clone resource of the German cDNA consortium.</title>
        <authorList>
            <person name="Bechtel S."/>
            <person name="Rosenfelder H."/>
            <person name="Duda A."/>
            <person name="Schmidt C.P."/>
            <person name="Ernst U."/>
            <person name="Wellenreuther R."/>
            <person name="Mehrle A."/>
            <person name="Schuster C."/>
            <person name="Bahr A."/>
            <person name="Bloecker H."/>
            <person name="Heubner D."/>
            <person name="Hoerlein A."/>
            <person name="Michel G."/>
            <person name="Wedler H."/>
            <person name="Koehrer K."/>
            <person name="Ottenwaelder B."/>
            <person name="Poustka A."/>
            <person name="Wiemann S."/>
            <person name="Schupp I."/>
        </authorList>
    </citation>
    <scope>NUCLEOTIDE SEQUENCE [LARGE SCALE MRNA] OF 283-521</scope>
    <source>
        <tissue>Uterus</tissue>
    </source>
</reference>
<reference key="7">
    <citation type="journal article" date="2005" name="Mol. Cell. Biol.">
        <title>A human protein complex homologous to the Drosophila MSL complex is responsible for the majority of histone H4 acetylation at lysine 16.</title>
        <authorList>
            <person name="Smith E.R."/>
            <person name="Cayrou C."/>
            <person name="Huang R."/>
            <person name="Lane W.S."/>
            <person name="Cote J."/>
            <person name="Lucchesi J.C."/>
        </authorList>
    </citation>
    <scope>IDENTIFICATION OF MSL COMPLEX COMPONENTS</scope>
    <scope>FUNCTION OF THE MSL COMPLEX</scope>
    <scope>IDENTIFICATION BY MASS SPECTROMETRY</scope>
</reference>
<reference key="8">
    <citation type="journal article" date="2006" name="Mol. Cell. Biol.">
        <authorList>
            <person name="Smith E.R."/>
            <person name="Cayrou C."/>
            <person name="Huang R."/>
            <person name="Lane W.S."/>
            <person name="Cote J."/>
            <person name="Lucchesi J.C."/>
        </authorList>
    </citation>
    <scope>ERRATUM OF PUBMED:16227571</scope>
</reference>
<reference key="9">
    <citation type="journal article" date="2006" name="Mol. Cell">
        <title>Nuclear pore components are involved in the transcriptional regulation of dosage compensation in Drosophila.</title>
        <authorList>
            <person name="Mendjan S."/>
            <person name="Taipale M."/>
            <person name="Kind J."/>
            <person name="Holz H."/>
            <person name="Gebhardt P."/>
            <person name="Schelder M."/>
            <person name="Vermeulen M."/>
            <person name="Buscaino A."/>
            <person name="Duncan K."/>
            <person name="Mueller J."/>
            <person name="Wilm M."/>
            <person name="Stunnenberg H.G."/>
            <person name="Saumweber H."/>
            <person name="Akhtar A."/>
        </authorList>
    </citation>
    <scope>FUNCTION</scope>
    <scope>IDENTIFICATION IN THE MSL COMPLEX</scope>
</reference>
<reference key="10">
    <citation type="journal article" date="2008" name="Proc. Natl. Acad. Sci. U.S.A.">
        <title>A quantitative atlas of mitotic phosphorylation.</title>
        <authorList>
            <person name="Dephoure N."/>
            <person name="Zhou C."/>
            <person name="Villen J."/>
            <person name="Beausoleil S.A."/>
            <person name="Bakalarski C.E."/>
            <person name="Elledge S.J."/>
            <person name="Gygi S.P."/>
        </authorList>
    </citation>
    <scope>PHOSPHORYLATION [LARGE SCALE ANALYSIS] AT SER-367; SER-407 AND SER-411</scope>
    <scope>IDENTIFICATION BY MASS SPECTROMETRY [LARGE SCALE ANALYSIS]</scope>
    <source>
        <tissue>Cervix carcinoma</tissue>
    </source>
</reference>
<reference key="11">
    <citation type="journal article" date="2009" name="Sci. Signal.">
        <title>Quantitative phosphoproteomic analysis of T cell receptor signaling reveals system-wide modulation of protein-protein interactions.</title>
        <authorList>
            <person name="Mayya V."/>
            <person name="Lundgren D.H."/>
            <person name="Hwang S.-I."/>
            <person name="Rezaul K."/>
            <person name="Wu L."/>
            <person name="Eng J.K."/>
            <person name="Rodionov V."/>
            <person name="Han D.K."/>
        </authorList>
    </citation>
    <scope>PHOSPHORYLATION [LARGE SCALE ANALYSIS] AT SER-311; THR-405 AND SER-407</scope>
    <scope>IDENTIFICATION BY MASS SPECTROMETRY [LARGE SCALE ANALYSIS]</scope>
    <source>
        <tissue>Leukemic T-cell</tissue>
    </source>
</reference>
<reference key="12">
    <citation type="journal article" date="2010" name="J. Biol. Chem.">
        <title>Subunit composition and substrate specificity of a MOF-containing histone acetyltransferase distinct from the male-specific lethal (MSL) complex.</title>
        <authorList>
            <person name="Cai Y."/>
            <person name="Jin J."/>
            <person name="Swanson S.K."/>
            <person name="Cole M.D."/>
            <person name="Choi S.H."/>
            <person name="Florens L."/>
            <person name="Washburn M.P."/>
            <person name="Conaway J.W."/>
            <person name="Conaway R.C."/>
        </authorList>
    </citation>
    <scope>IDENTIFICATION IN THE MSL COMPLEX</scope>
    <scope>FUNCTION OF THE MSL COMPLEX</scope>
</reference>
<reference key="13">
    <citation type="journal article" date="2010" name="Sci. Signal.">
        <title>Quantitative phosphoproteomics reveals widespread full phosphorylation site occupancy during mitosis.</title>
        <authorList>
            <person name="Olsen J.V."/>
            <person name="Vermeulen M."/>
            <person name="Santamaria A."/>
            <person name="Kumar C."/>
            <person name="Miller M.L."/>
            <person name="Jensen L.J."/>
            <person name="Gnad F."/>
            <person name="Cox J."/>
            <person name="Jensen T.S."/>
            <person name="Nigg E.A."/>
            <person name="Brunak S."/>
            <person name="Mann M."/>
        </authorList>
    </citation>
    <scope>PHOSPHORYLATION [LARGE SCALE ANALYSIS] AT SER-367</scope>
    <scope>IDENTIFICATION BY MASS SPECTROMETRY [LARGE SCALE ANALYSIS]</scope>
    <source>
        <tissue>Cervix carcinoma</tissue>
    </source>
</reference>
<reference key="14">
    <citation type="journal article" date="2011" name="Sci. Signal.">
        <title>System-wide temporal characterization of the proteome and phosphoproteome of human embryonic stem cell differentiation.</title>
        <authorList>
            <person name="Rigbolt K.T."/>
            <person name="Prokhorova T.A."/>
            <person name="Akimov V."/>
            <person name="Henningsen J."/>
            <person name="Johansen P.T."/>
            <person name="Kratchmarova I."/>
            <person name="Kassem M."/>
            <person name="Mann M."/>
            <person name="Olsen J.V."/>
            <person name="Blagoev B."/>
        </authorList>
    </citation>
    <scope>PHOSPHORYLATION [LARGE SCALE ANALYSIS] AT SER-400</scope>
    <scope>IDENTIFICATION BY MASS SPECTROMETRY [LARGE SCALE ANALYSIS]</scope>
</reference>
<reference key="15">
    <citation type="journal article" date="2012" name="Cell Res.">
        <title>Structural insight into the regulation of MOF in the male-specific lethal complex and the non-specific lethal complex.</title>
        <authorList>
            <person name="Huang J."/>
            <person name="Wan B."/>
            <person name="Wu L."/>
            <person name="Yang Y."/>
            <person name="Dou Y."/>
            <person name="Lei M."/>
        </authorList>
    </citation>
    <scope>FUNCTION IN MSL COMPLEX</scope>
    <scope>INTERACTION WITH MSL1</scope>
</reference>
<reference key="16">
    <citation type="journal article" date="2013" name="J. Proteome Res.">
        <title>Toward a comprehensive characterization of a human cancer cell phosphoproteome.</title>
        <authorList>
            <person name="Zhou H."/>
            <person name="Di Palma S."/>
            <person name="Preisinger C."/>
            <person name="Peng M."/>
            <person name="Polat A.N."/>
            <person name="Heck A.J."/>
            <person name="Mohammed S."/>
        </authorList>
    </citation>
    <scope>PHOSPHORYLATION [LARGE SCALE ANALYSIS] AT SER-311; SER-367 AND SER-400</scope>
    <scope>IDENTIFICATION BY MASS SPECTROMETRY [LARGE SCALE ANALYSIS]</scope>
    <source>
        <tissue>Cervix carcinoma</tissue>
        <tissue>Erythroleukemia</tissue>
    </source>
</reference>
<reference key="17">
    <citation type="journal article" date="2014" name="J. Proteomics">
        <title>An enzyme assisted RP-RPLC approach for in-depth analysis of human liver phosphoproteome.</title>
        <authorList>
            <person name="Bian Y."/>
            <person name="Song C."/>
            <person name="Cheng K."/>
            <person name="Dong M."/>
            <person name="Wang F."/>
            <person name="Huang J."/>
            <person name="Sun D."/>
            <person name="Wang L."/>
            <person name="Ye M."/>
            <person name="Zou H."/>
        </authorList>
    </citation>
    <scope>IDENTIFICATION BY MASS SPECTROMETRY [LARGE SCALE ANALYSIS]</scope>
    <source>
        <tissue>Liver</tissue>
    </source>
</reference>
<reference key="18">
    <citation type="journal article" date="2021" name="Nat. Cell Biol.">
        <title>Disruption of the MSL complex inhibits tumour maintenance by exacerbating chromosomal instability.</title>
        <authorList>
            <person name="Monserrat J."/>
            <person name="Morales Torres C."/>
            <person name="Richardson L."/>
            <person name="Wilson T.S."/>
            <person name="Patel H."/>
            <person name="Domart M.C."/>
            <person name="Horswell S."/>
            <person name="Song O.R."/>
            <person name="Jiang M."/>
            <person name="Crawford M."/>
            <person name="Bui M."/>
            <person name="Dalal Y."/>
            <person name="Scaffidi P."/>
        </authorList>
    </citation>
    <scope>FUNCTION</scope>
    <scope>IDENTIFICATION IN THE MSL COMPLEX</scope>
</reference>
<reference key="19">
    <citation type="journal article" date="2010" name="Nat. Struct. Mol. Biol.">
        <title>Corecognition of DNA and a methylated histone tail by the MSL3 chromodomain.</title>
        <authorList>
            <person name="Kim D."/>
            <person name="Blus B.J."/>
            <person name="Chandra V."/>
            <person name="Huang P."/>
            <person name="Rastinejad F."/>
            <person name="Khorasanizadeh S."/>
        </authorList>
    </citation>
    <scope>X-RAY CRYSTALLOGRAPHY (2.35 ANGSTROMS) OF 1-101 IN COMPLEX WITH DNA AND HISTONE H4</scope>
    <scope>MUTAGENESIS OF HIS-55; TRP-59 AND ARG-65</scope>
    <scope>FUNCTION</scope>
</reference>
<reference key="20">
    <citation type="journal article" date="2010" name="J. Biol. Chem.">
        <title>Structural and biochemical studies on the chromo-barrel domain of male specific lethal 3 (MSL3) reveal a binding preference for mono- or dimethyllysine 20 on histone H4.</title>
        <authorList>
            <person name="Moore S.A."/>
            <person name="Ferhatoglu Y."/>
            <person name="Jia Y."/>
            <person name="Al-Jiab R.A."/>
            <person name="Scott M.J."/>
        </authorList>
    </citation>
    <scope>X-RAY CRYSTALLOGRAPHY (2.5 ANGSTROMS) OF 2-93</scope>
    <scope>MUTAGENESIS OF TYR-31</scope>
    <scope>FUNCTION</scope>
</reference>
<reference key="21">
    <citation type="journal article" date="2011" name="Nat. Struct. Mol. Biol.">
        <title>Structural basis for MOF and MSL3 recruitment into the dosage compensation complex by MSL1.</title>
        <authorList>
            <person name="Kadlec J."/>
            <person name="Hallacli E."/>
            <person name="Lipp M."/>
            <person name="Holz H."/>
            <person name="Sanchez-Weatherby J."/>
            <person name="Cusack S."/>
            <person name="Akhtar A."/>
        </authorList>
    </citation>
    <scope>X-RAY CRYSTALLOGRAPHY (3.00 ANGSTROMS) OF 167-517 IN COMPLEX WITH MSL1</scope>
    <scope>FUNCTION IN MSL COMPLEX</scope>
    <scope>INTERACTION WITH MSL1</scope>
</reference>
<reference key="22">
    <citation type="journal article" date="2018" name="Nat. Genet.">
        <title>De novo mutations in MSL3 cause an X-linked syndrome marked by impaired histone H4 lysine 16 acetylation.</title>
        <authorList>
            <consortium name="DDD Study"/>
            <person name="Basilicata M.F."/>
            <person name="Bruel A.L."/>
            <person name="Semplicio G."/>
            <person name="Valsecchi C.I.K."/>
            <person name="Aktas T."/>
            <person name="Duffourd Y."/>
            <person name="Rumpf T."/>
            <person name="Morton J."/>
            <person name="Bache I."/>
            <person name="Szymanski W.G."/>
            <person name="Gilissen C."/>
            <person name="Vanakker O."/>
            <person name="Ounap K."/>
            <person name="Mittler G."/>
            <person name="van der Burgt I."/>
            <person name="El Chehadeh S."/>
            <person name="Cho M.T."/>
            <person name="Pfundt R."/>
            <person name="Tan T.Y."/>
            <person name="Kirchhoff M."/>
            <person name="Menten B."/>
            <person name="Vergult S."/>
            <person name="Lindstrom K."/>
            <person name="Reis A."/>
            <person name="Johnson D.S."/>
            <person name="Fryer A."/>
            <person name="McKay V."/>
            <person name="Fisher R.B."/>
            <person name="Thauvin-Robinet C."/>
            <person name="Francis D."/>
            <person name="Roscioli T."/>
            <person name="Pajusalu S."/>
            <person name="Radtke K."/>
            <person name="Ganesh J."/>
            <person name="Brunner H.G."/>
            <person name="Wilson M."/>
            <person name="Faivre L."/>
            <person name="Kalscheuer V.M."/>
            <person name="Thevenon J."/>
            <person name="Akhtar A."/>
        </authorList>
    </citation>
    <scope>VARIANTS MRXSBA 281-GLN--TYR-521 DEL; PRO-308; 346-GLN--TYR-521 DEL AND 458-ARG--TYR-521 DEL</scope>
    <scope>INVOLVEMENT IN MRXSBA</scope>
    <scope>CHARACTERIZATION OF VARIANT MRXSBA 346-GLN--TYR-521 DEL</scope>
    <scope>INTERACTION WITH KAT8 AND MSL1</scope>
    <scope>SUBCELLULAR LOCATION</scope>
</reference>
<reference key="23">
    <citation type="journal article" date="2021" name="Genet. Med.">
        <title>Defining the genotypic and phenotypic spectrum of X-linked MSL3-related disorder.</title>
        <authorList>
            <person name="Brunet T."/>
            <person name="McWalter K."/>
            <person name="Mayerhanser K."/>
            <person name="Anbouba G.M."/>
            <person name="Armstrong-Javors A."/>
            <person name="Bader I."/>
            <person name="Baugh E."/>
            <person name="Begtrup A."/>
            <person name="Bupp C.P."/>
            <person name="Callewaert B.L."/>
            <person name="Cereda A."/>
            <person name="Cousin M.A."/>
            <person name="Del Rey Jimenez J.C."/>
            <person name="Demmer L."/>
            <person name="Dsouza N.R."/>
            <person name="Fleischer N."/>
            <person name="Gavrilova R.H."/>
            <person name="Ghate S."/>
            <person name="Graf E."/>
            <person name="Green A."/>
            <person name="Green S.R."/>
            <person name="Iascone M."/>
            <person name="Kdissa A."/>
            <person name="Klee D."/>
            <person name="Klee E.W."/>
            <person name="Lancaster E."/>
            <person name="Lindstrom K."/>
            <person name="Mayr J.A."/>
            <person name="McEntagart M."/>
            <person name="Meeks N.J.L."/>
            <person name="Mittag D."/>
            <person name="Moore H."/>
            <person name="Olsen A.K."/>
            <person name="Ortiz D."/>
            <person name="Parsons G."/>
            <person name="Pena L.D.M."/>
            <person name="Person R.E."/>
            <person name="Punj S."/>
            <person name="Ramos-Rivera G.A."/>
            <person name="Sacoto M.J.G."/>
            <person name="Bradley Schaefer G."/>
            <person name="Schnur R.E."/>
            <person name="Scott T.M."/>
            <person name="Scott D.A."/>
            <person name="Serbinski C.R."/>
            <person name="Shashi V."/>
            <person name="Siu V.M."/>
            <person name="Stadheim B.F."/>
            <person name="Sullivan J.A."/>
            <person name="Svantnerova J."/>
            <person name="Velsher L."/>
            <person name="Wargowski D.S."/>
            <person name="Wentzensen I.M."/>
            <person name="Wieczorek D."/>
            <person name="Winkelmann J."/>
            <person name="Yap P."/>
            <person name="Zech M."/>
            <person name="Zimmermann M.T."/>
            <person name="Meitinger T."/>
            <person name="Distelmaier F."/>
            <person name="Wagner M."/>
        </authorList>
    </citation>
    <scope>VARIANTS MRXSBA 189-TYR--TYR-521 DEL; 197-LEU--TYR-521 DEL; 289-LYS--TYR-521 DEL; 305-GLN--TYR-521 DEL; 321-GLN--TYR-521 DEL; 369-GLN--TYR-521 DEL; THR-437; 438-TYR--TYR-521 DEL; 449-TYR--TYR-521 DEL; GLN-454 DEL; PRO-457; 458-ARG--TYR-521 DEL AND LEU-458</scope>
</reference>
<comment type="function">
    <text evidence="1 2 8 9 10 11 12 13 15 17">Non-catalytic component of the MSL histone acetyltransferase complex, a multiprotein complex that mediates the majority of histone H4 acetylation at 'Lys-16' (H4K16ac), an epigenetic mark that prevents chromatin compaction (PubMed:16227571, PubMed:16543150, PubMed:20018852, PubMed:20657587, PubMed:20943666, PubMed:21217699, PubMed:30224647, PubMed:33837287). The MSL complex is required for chromosome stability and genome integrity by maintaining homeostatic levels of H4K16ac (PubMed:33837287). The MSL complex is also involved in gene dosage by promoting up-regulation of genes expressed by the X chromosome (By similarity). X up-regulation is required to compensate for autosomal biallelic expression (By similarity). The MSL complex also participates in gene dosage compensation by promoting expression of Tsix non-coding RNA (By similarity). Acts as a histone reader that specifically recognizes and binds histone H4 monomethylated at 'Lys-20' (H4K20Me1) in a DNA-dependent manner and is proposed to be involved in chromosomal targeting of the MSL complex (PubMed:20657587, PubMed:20943666). May play a role X inactivation in females (PubMed:21217699).</text>
</comment>
<comment type="subunit">
    <text evidence="9 10 11 13 14 15 17">Component of the MSL histone acetyltransferase complex at least composed of the KAT8/MOF, MSL1/hampin, MSL2 and MSL3 (PubMed:16543150, PubMed:20018852, PubMed:20657587, PubMed:21217699, PubMed:22547026, PubMed:30224647, PubMed:33837287). Interacts (via the MRG domain) with MSL1 and KAT8/MOF (PubMed:21217699, PubMed:30224647).</text>
</comment>
<comment type="interaction">
    <interactant intactId="EBI-2560796">
        <id>Q8N5Y2</id>
    </interactant>
    <interactant intactId="EBI-720609">
        <id>O76024</id>
        <label>WFS1</label>
    </interactant>
    <organismsDiffer>false</organismsDiffer>
    <experiments>3</experiments>
</comment>
<comment type="subcellular location">
    <subcellularLocation>
        <location evidence="15">Nucleus</location>
    </subcellularLocation>
</comment>
<comment type="alternative products">
    <event type="alternative splicing"/>
    <isoform>
        <id>Q8N5Y2-1</id>
        <name>1</name>
        <sequence type="displayed"/>
    </isoform>
    <isoform>
        <id>Q8N5Y2-2</id>
        <name>2</name>
        <sequence type="described" ref="VSP_007636 VSP_007637"/>
    </isoform>
    <isoform>
        <id>Q8N5Y2-3</id>
        <name>3</name>
        <sequence type="described" ref="VSP_043342"/>
    </isoform>
    <isoform>
        <id>Q8N5Y2-4</id>
        <name>4</name>
        <sequence type="described" ref="VSP_045652"/>
    </isoform>
    <isoform>
        <id>Q8N5Y2-5</id>
        <name>5</name>
        <sequence type="described" ref="VSP_045653 VSP_045654"/>
    </isoform>
    <isoform>
        <id>Q8N5Y2-6</id>
        <name>6</name>
        <sequence type="described" ref="VSP_055376 VSP_055377"/>
    </isoform>
</comment>
<comment type="tissue specificity">
    <text evidence="6">Expressed in many tissues including liver, pancreas, heart, lung, kidney, skeletal muscle, brain, and placenta, with highest expression in skeletal muscle and heart.</text>
</comment>
<comment type="disease" evidence="15 16">
    <disease id="DI-05649">
        <name>Basilicata-Akhtar syndrome</name>
        <acronym>MRXSBA</acronym>
        <description>An X-linked syndrome characterized by intellectual disability, global developmental delay, progressive gait disturbance, poor or absent speech, facial dysmorphism, and mild distal skeletal anomalies.</description>
        <dbReference type="MIM" id="301032"/>
    </disease>
    <text>The disease is caused by variants affecting the gene represented in this entry.</text>
</comment>
<comment type="miscellaneous">
    <text evidence="6">MSL3L1 gene undergoes X inactivation.</text>
</comment>
<keyword id="KW-0002">3D-structure</keyword>
<keyword id="KW-0025">Alternative splicing</keyword>
<keyword id="KW-0156">Chromatin regulator</keyword>
<keyword id="KW-0238">DNA-binding</keyword>
<keyword id="KW-0991">Intellectual disability</keyword>
<keyword id="KW-0539">Nucleus</keyword>
<keyword id="KW-0597">Phosphoprotein</keyword>
<keyword id="KW-1267">Proteomics identification</keyword>
<keyword id="KW-1185">Reference proteome</keyword>
<keyword id="KW-0804">Transcription</keyword>
<keyword id="KW-0805">Transcription regulation</keyword>
<sequence>MSASEGMKFKFHSGEKVLCFEPDPTKARVLYDAKIVDVIVGKDEKGRKIPEYLIHFNGWNRSWDRWAAEDHVLRDTDENRRLQRKLARKAVARLRSTGRKKKRCRLPGVDSVLKGLPTEEKDENDENSLSSSSDCSENKDEEISEESDIEEKTEVKEEPELQTRREMEERTITIEIPEVLKKQLEDDCYYINRRKRLVKLPCQTNIITILESYVKHFAINAAFSANERPRHHHVMPHANMNVHYIPAEKNVDLCKEMVDGLRITFDYTLPLVLLYPYEQAQYKKVTSSKFFLPIKESATSTNRSQEELSPSPPLLNPSTPQSTESQPTTGEPATPKRRKAEPEALQSLRRSTRHSANCDRLSESSASPQPKRRQQDTSASMPKLFLHLEKKTPVHSRSSSPIPLTPSKEGSAVFAGFEGRRTNEINEVLSWKLVPDNYPPGDQPPPPSYIYGAQHLLRLFVKLPEILGKMSFSEKNLKALLKHFDLFLRFLAEYHDDFFPESAYVAACEAHYSTKNPRAIY</sequence>
<accession>Q8N5Y2</accession>
<accession>A6NCU2</accession>
<accession>A6NHW8</accession>
<accession>A8K165</accession>
<accession>B4DUV8</accession>
<accession>B7Z227</accession>
<accession>Q9UG70</accession>
<accession>Q9Y5Z8</accession>
<proteinExistence type="evidence at protein level"/>
<feature type="chain" id="PRO_0000080247" description="MSL complex subunit 3">
    <location>
        <begin position="1"/>
        <end position="521"/>
    </location>
</feature>
<feature type="domain" description="Tudor-knot" evidence="3">
    <location>
        <begin position="13"/>
        <end position="71"/>
    </location>
</feature>
<feature type="domain" description="MRG" evidence="4">
    <location>
        <begin position="168"/>
        <end position="517"/>
    </location>
</feature>
<feature type="region of interest" description="Disordered" evidence="5">
    <location>
        <begin position="114"/>
        <end position="166"/>
    </location>
</feature>
<feature type="region of interest" description="Required for the histone acetyltransferase activity of the MSL complex">
    <location>
        <begin position="290"/>
        <end position="440"/>
    </location>
</feature>
<feature type="region of interest" description="Disordered" evidence="5">
    <location>
        <begin position="298"/>
        <end position="409"/>
    </location>
</feature>
<feature type="compositionally biased region" description="Acidic residues" evidence="5">
    <location>
        <begin position="139"/>
        <end position="149"/>
    </location>
</feature>
<feature type="compositionally biased region" description="Basic and acidic residues" evidence="5">
    <location>
        <begin position="150"/>
        <end position="166"/>
    </location>
</feature>
<feature type="compositionally biased region" description="Low complexity" evidence="5">
    <location>
        <begin position="316"/>
        <end position="329"/>
    </location>
</feature>
<feature type="modified residue" description="Phosphoserine" evidence="2">
    <location>
        <position position="309"/>
    </location>
</feature>
<feature type="modified residue" description="Phosphoserine" evidence="24 27">
    <location>
        <position position="311"/>
    </location>
</feature>
<feature type="modified residue" description="Phosphoserine" evidence="23 25 27">
    <location>
        <position position="367"/>
    </location>
</feature>
<feature type="modified residue" description="Phosphoserine" evidence="26 27">
    <location>
        <position position="400"/>
    </location>
</feature>
<feature type="modified residue" description="Phosphothreonine" evidence="24">
    <location>
        <position position="405"/>
    </location>
</feature>
<feature type="modified residue" description="Phosphoserine" evidence="23 24">
    <location>
        <position position="407"/>
    </location>
</feature>
<feature type="modified residue" description="Phosphoserine" evidence="23">
    <location>
        <position position="411"/>
    </location>
</feature>
<feature type="splice variant" id="VSP_045652" description="In isoform 4." evidence="19">
    <location>
        <begin position="1"/>
        <end position="166"/>
    </location>
</feature>
<feature type="splice variant" id="VSP_007636" description="In isoform 2." evidence="18">
    <location>
        <begin position="1"/>
        <end position="59"/>
    </location>
</feature>
<feature type="splice variant" id="VSP_043342" description="In isoform 3." evidence="19">
    <original>MSASEGMKFKFHSGEKVLCFEPDPTKARVLYDAK</original>
    <variation>MSPSVRPGAGWAPVGRPGRPIQ</variation>
    <location>
        <begin position="1"/>
        <end position="34"/>
    </location>
</feature>
<feature type="splice variant" id="VSP_055376" description="In isoform 6." evidence="19">
    <original>MSASEG</original>
    <variation>MKMMKT</variation>
    <location>
        <begin position="1"/>
        <end position="6"/>
    </location>
</feature>
<feature type="splice variant" id="VSP_055377" description="In isoform 6." evidence="19">
    <location>
        <begin position="7"/>
        <end position="155"/>
    </location>
</feature>
<feature type="splice variant" id="VSP_007637" description="In isoform 2." evidence="18">
    <original>NR</original>
    <variation>MP</variation>
    <location>
        <begin position="60"/>
        <end position="61"/>
    </location>
</feature>
<feature type="splice variant" id="VSP_045653" description="In isoform 5." evidence="19">
    <original>KTPVHSRSSSPIPLTPSKEGSAVFAG</original>
    <variation>SRFILGCPRPGRASVYFVFSQCQAWC</variation>
    <location>
        <begin position="391"/>
        <end position="416"/>
    </location>
</feature>
<feature type="splice variant" id="VSP_045654" description="In isoform 5." evidence="19">
    <location>
        <begin position="417"/>
        <end position="521"/>
    </location>
</feature>
<feature type="sequence variant" id="VAR_069061" description="In dbSNP:rs150938844." evidence="7">
    <original>S</original>
    <variation>T</variation>
    <location>
        <position position="2"/>
    </location>
</feature>
<feature type="sequence variant" id="VAR_089044" description="In MRXSBA; uncertain significance." evidence="16">
    <location>
        <begin position="189"/>
        <end position="521"/>
    </location>
</feature>
<feature type="sequence variant" id="VAR_089045" description="In MRXSBA." evidence="16">
    <location>
        <begin position="197"/>
        <end position="521"/>
    </location>
</feature>
<feature type="sequence variant" id="VAR_048732" description="In dbSNP:rs1051595.">
    <original>K</original>
    <variation>Q</variation>
    <location>
        <position position="199"/>
    </location>
</feature>
<feature type="sequence variant" id="VAR_082955" description="In MRXSBA." evidence="15">
    <location>
        <begin position="281"/>
        <end position="521"/>
    </location>
</feature>
<feature type="sequence variant" id="VAR_089046" description="In MRXSBA; uncertain significance." evidence="16">
    <location>
        <begin position="289"/>
        <end position="521"/>
    </location>
</feature>
<feature type="sequence variant" id="VAR_089047" description="In MRXSBA; uncertain significance." evidence="16">
    <location>
        <begin position="305"/>
        <end position="521"/>
    </location>
</feature>
<feature type="sequence variant" id="VAR_082956" description="In MRXSBA; uncertain significance; dbSNP:rs1555906707." evidence="15">
    <original>L</original>
    <variation>P</variation>
    <location>
        <position position="308"/>
    </location>
</feature>
<feature type="sequence variant" id="VAR_089048" description="In MRXSBA; uncertain significance." evidence="16">
    <location>
        <begin position="321"/>
        <end position="521"/>
    </location>
</feature>
<feature type="sequence variant" id="VAR_082957" description="In MRXSBA; loss of interaction with MOF and MSL1." evidence="15">
    <location>
        <begin position="346"/>
        <end position="521"/>
    </location>
</feature>
<feature type="sequence variant" id="VAR_089049" description="In MRXSBA; uncertain significance." evidence="16">
    <location>
        <begin position="369"/>
        <end position="521"/>
    </location>
</feature>
<feature type="sequence variant" id="VAR_089050" description="In MRXSBA; uncertain significance." evidence="16">
    <original>N</original>
    <variation>T</variation>
    <location>
        <position position="437"/>
    </location>
</feature>
<feature type="sequence variant" id="VAR_089051" description="In MRXSBA; uncertain significance." evidence="16">
    <location>
        <begin position="438"/>
        <end position="521"/>
    </location>
</feature>
<feature type="sequence variant" id="VAR_089052" description="In MRXSBA; uncertain significance." evidence="16">
    <location>
        <begin position="449"/>
        <end position="521"/>
    </location>
</feature>
<feature type="sequence variant" id="VAR_089053" description="In MRXSBA; uncertain significance." evidence="16">
    <location>
        <position position="454"/>
    </location>
</feature>
<feature type="sequence variant" id="VAR_089054" description="In MRXSBA; uncertain significance." evidence="16">
    <original>L</original>
    <variation>P</variation>
    <location>
        <position position="457"/>
    </location>
</feature>
<feature type="sequence variant" id="VAR_082958" description="In MRXSBA." evidence="15 16">
    <location>
        <begin position="458"/>
        <end position="521"/>
    </location>
</feature>
<feature type="sequence variant" id="VAR_089055" description="In MRXSBA; uncertain significance." evidence="16">
    <original>R</original>
    <variation>L</variation>
    <location>
        <position position="458"/>
    </location>
</feature>
<feature type="mutagenesis site" description="Diminishes interaction with histone H4 monomethylated at 'Lys-20'(H4K20Me1)." evidence="12">
    <original>Y</original>
    <variation>A</variation>
    <location>
        <position position="31"/>
    </location>
</feature>
<feature type="mutagenesis site" description="Diminishes DNA-binding; when associated with A-65." evidence="11">
    <original>H</original>
    <variation>A</variation>
    <location>
        <position position="55"/>
    </location>
</feature>
<feature type="mutagenesis site" description="Abolishes interaction with histone H4 monomethylated at 'Lys-20'(H4K20Me1).">
    <original>F</original>
    <variation>A</variation>
    <location>
        <position position="56"/>
    </location>
</feature>
<feature type="mutagenesis site" description="Diminishes DNA-binding." evidence="11">
    <original>W</original>
    <variation>G</variation>
    <location>
        <position position="59"/>
    </location>
</feature>
<feature type="mutagenesis site" description="Diminishes DNA-binding; when associated with A-55." evidence="11">
    <original>R</original>
    <variation>A</variation>
    <location>
        <position position="65"/>
    </location>
</feature>
<feature type="sequence conflict" description="In Ref. 1; AAD38499." evidence="21" ref="1">
    <original>D</original>
    <variation>V</variation>
    <location>
        <position position="37"/>
    </location>
</feature>
<feature type="sequence conflict" description="In Ref. 2; AK025642." evidence="21" ref="2">
    <original>Q</original>
    <variation>R</variation>
    <location>
        <position position="346"/>
    </location>
</feature>
<feature type="sequence conflict" description="In Ref. 2; AK025642." evidence="21" ref="2">
    <original>K</original>
    <variation>E</variation>
    <location>
        <position position="391"/>
    </location>
</feature>
<feature type="strand" evidence="29">
    <location>
        <begin position="16"/>
        <end position="20"/>
    </location>
</feature>
<feature type="strand" evidence="29">
    <location>
        <begin position="30"/>
        <end position="42"/>
    </location>
</feature>
<feature type="strand" evidence="29">
    <location>
        <begin position="48"/>
        <end position="56"/>
    </location>
</feature>
<feature type="helix" evidence="29">
    <location>
        <begin position="61"/>
        <end position="63"/>
    </location>
</feature>
<feature type="strand" evidence="29">
    <location>
        <begin position="65"/>
        <end position="68"/>
    </location>
</feature>
<feature type="helix" evidence="29">
    <location>
        <begin position="69"/>
        <end position="71"/>
    </location>
</feature>
<feature type="strand" evidence="29">
    <location>
        <begin position="72"/>
        <end position="74"/>
    </location>
</feature>
<feature type="helix" evidence="29">
    <location>
        <begin position="77"/>
        <end position="91"/>
    </location>
</feature>
<feature type="helix" evidence="28">
    <location>
        <begin position="178"/>
        <end position="192"/>
    </location>
</feature>
<feature type="helix" evidence="28">
    <location>
        <begin position="206"/>
        <end position="222"/>
    </location>
</feature>
<feature type="helix" evidence="28">
    <location>
        <begin position="251"/>
        <end position="272"/>
    </location>
</feature>
<feature type="helix" evidence="28">
    <location>
        <begin position="276"/>
        <end position="278"/>
    </location>
</feature>
<feature type="helix" evidence="28">
    <location>
        <begin position="279"/>
        <end position="287"/>
    </location>
</feature>
<feature type="helix" evidence="28">
    <location>
        <begin position="447"/>
        <end position="449"/>
    </location>
</feature>
<feature type="helix" evidence="28">
    <location>
        <begin position="453"/>
        <end position="469"/>
    </location>
</feature>
<feature type="helix" evidence="28">
    <location>
        <begin position="474"/>
        <end position="493"/>
    </location>
</feature>
<feature type="helix" evidence="28">
    <location>
        <begin position="495"/>
        <end position="498"/>
    </location>
</feature>
<feature type="helix" evidence="28">
    <location>
        <begin position="501"/>
        <end position="503"/>
    </location>
</feature>
<dbReference type="EMBL" id="AF117065">
    <property type="protein sequence ID" value="AAD38499.1"/>
    <property type="molecule type" value="mRNA"/>
</dbReference>
<dbReference type="EMBL" id="AK025642">
    <property type="status" value="NOT_ANNOTATED_CDS"/>
    <property type="molecule type" value="mRNA"/>
</dbReference>
<dbReference type="EMBL" id="AK289780">
    <property type="protein sequence ID" value="BAF82469.1"/>
    <property type="molecule type" value="mRNA"/>
</dbReference>
<dbReference type="EMBL" id="AK294255">
    <property type="protein sequence ID" value="BAH11713.1"/>
    <property type="molecule type" value="mRNA"/>
</dbReference>
<dbReference type="EMBL" id="AK300814">
    <property type="protein sequence ID" value="BAG62470.1"/>
    <property type="molecule type" value="mRNA"/>
</dbReference>
<dbReference type="EMBL" id="AC004554">
    <property type="status" value="NOT_ANNOTATED_CDS"/>
    <property type="molecule type" value="Genomic_DNA"/>
</dbReference>
<dbReference type="EMBL" id="CH471074">
    <property type="protein sequence ID" value="EAW98799.1"/>
    <property type="molecule type" value="Genomic_DNA"/>
</dbReference>
<dbReference type="EMBL" id="CH471074">
    <property type="protein sequence ID" value="EAW98801.1"/>
    <property type="molecule type" value="Genomic_DNA"/>
</dbReference>
<dbReference type="EMBL" id="BC031210">
    <property type="protein sequence ID" value="AAH31210.1"/>
    <property type="molecule type" value="mRNA"/>
</dbReference>
<dbReference type="EMBL" id="AL050178">
    <property type="protein sequence ID" value="CAB43308.1"/>
    <property type="molecule type" value="mRNA"/>
</dbReference>
<dbReference type="EMBL" id="AL713667">
    <property type="protein sequence ID" value="CAD28473.1"/>
    <property type="molecule type" value="mRNA"/>
</dbReference>
<dbReference type="CCDS" id="CCDS14147.1">
    <molecule id="Q8N5Y2-1"/>
</dbReference>
<dbReference type="CCDS" id="CCDS14148.1">
    <molecule id="Q8N5Y2-5"/>
</dbReference>
<dbReference type="CCDS" id="CCDS14149.1">
    <molecule id="Q8N5Y2-4"/>
</dbReference>
<dbReference type="CCDS" id="CCDS55369.1">
    <molecule id="Q8N5Y2-3"/>
</dbReference>
<dbReference type="CCDS" id="CCDS65213.1">
    <molecule id="Q8N5Y2-6"/>
</dbReference>
<dbReference type="PIR" id="T08795">
    <property type="entry name" value="T08795"/>
</dbReference>
<dbReference type="RefSeq" id="NP_001180199.1">
    <molecule id="Q8N5Y2-3"/>
    <property type="nucleotide sequence ID" value="NM_001193270.2"/>
</dbReference>
<dbReference type="RefSeq" id="NP_001269103.1">
    <molecule id="Q8N5Y2-6"/>
    <property type="nucleotide sequence ID" value="NM_001282174.1"/>
</dbReference>
<dbReference type="RefSeq" id="NP_006791.2">
    <molecule id="Q8N5Y2-4"/>
    <property type="nucleotide sequence ID" value="NM_006800.3"/>
</dbReference>
<dbReference type="RefSeq" id="NP_523352.1">
    <molecule id="Q8N5Y2-5"/>
    <property type="nucleotide sequence ID" value="NM_078628.2"/>
</dbReference>
<dbReference type="RefSeq" id="NP_523353.2">
    <molecule id="Q8N5Y2-1"/>
    <property type="nucleotide sequence ID" value="NM_078629.4"/>
</dbReference>
<dbReference type="RefSeq" id="XP_005274497.1">
    <property type="nucleotide sequence ID" value="XM_005274440.2"/>
</dbReference>
<dbReference type="PDB" id="2Y0N">
    <property type="method" value="X-ray"/>
    <property type="resolution" value="3.00 A"/>
    <property type="chains" value="A/B/C/D=167-289, A/B/C/D=442-518"/>
</dbReference>
<dbReference type="PDB" id="3OA6">
    <property type="method" value="X-ray"/>
    <property type="resolution" value="2.35 A"/>
    <property type="chains" value="A/B=1-101"/>
</dbReference>
<dbReference type="PDB" id="3OB9">
    <property type="method" value="X-ray"/>
    <property type="resolution" value="2.50 A"/>
    <property type="chains" value="A/B/C/D/E=2-93"/>
</dbReference>
<dbReference type="PDBsum" id="2Y0N"/>
<dbReference type="PDBsum" id="3OA6"/>
<dbReference type="PDBsum" id="3OB9"/>
<dbReference type="SMR" id="Q8N5Y2"/>
<dbReference type="BioGRID" id="116143">
    <property type="interactions" value="28"/>
</dbReference>
<dbReference type="ComplexPortal" id="CPX-815">
    <property type="entry name" value="MSL histone acetyltransferase complex"/>
</dbReference>
<dbReference type="CORUM" id="Q8N5Y2"/>
<dbReference type="DIP" id="DIP-56857N"/>
<dbReference type="FunCoup" id="Q8N5Y2">
    <property type="interactions" value="2325"/>
</dbReference>
<dbReference type="IntAct" id="Q8N5Y2">
    <property type="interactions" value="21"/>
</dbReference>
<dbReference type="MINT" id="Q8N5Y2"/>
<dbReference type="STRING" id="9606.ENSP00000312244"/>
<dbReference type="iPTMnet" id="Q8N5Y2"/>
<dbReference type="PhosphoSitePlus" id="Q8N5Y2"/>
<dbReference type="BioMuta" id="MSL3"/>
<dbReference type="DMDM" id="32171482"/>
<dbReference type="jPOST" id="Q8N5Y2"/>
<dbReference type="MassIVE" id="Q8N5Y2"/>
<dbReference type="PaxDb" id="9606-ENSP00000312244"/>
<dbReference type="PeptideAtlas" id="Q8N5Y2"/>
<dbReference type="ProteomicsDB" id="1230"/>
<dbReference type="ProteomicsDB" id="6399"/>
<dbReference type="ProteomicsDB" id="72108">
    <molecule id="Q8N5Y2-1"/>
</dbReference>
<dbReference type="ProteomicsDB" id="72109">
    <molecule id="Q8N5Y2-2"/>
</dbReference>
<dbReference type="ProteomicsDB" id="72110">
    <molecule id="Q8N5Y2-3"/>
</dbReference>
<dbReference type="ProteomicsDB" id="863"/>
<dbReference type="Pumba" id="Q8N5Y2"/>
<dbReference type="Antibodypedia" id="23748">
    <property type="antibodies" value="127 antibodies from 20 providers"/>
</dbReference>
<dbReference type="DNASU" id="10943"/>
<dbReference type="Ensembl" id="ENST00000312196.10">
    <molecule id="Q8N5Y2-1"/>
    <property type="protein sequence ID" value="ENSP00000312244.4"/>
    <property type="gene ID" value="ENSG00000005302.19"/>
</dbReference>
<dbReference type="Ensembl" id="ENST00000337339.7">
    <molecule id="Q8N5Y2-5"/>
    <property type="protein sequence ID" value="ENSP00000338078.2"/>
    <property type="gene ID" value="ENSG00000005302.19"/>
</dbReference>
<dbReference type="Ensembl" id="ENST00000361672.6">
    <molecule id="Q8N5Y2-6"/>
    <property type="protein sequence ID" value="ENSP00000354562.2"/>
    <property type="gene ID" value="ENSG00000005302.19"/>
</dbReference>
<dbReference type="Ensembl" id="ENST00000398527.7">
    <molecule id="Q8N5Y2-3"/>
    <property type="protein sequence ID" value="ENSP00000381538.2"/>
    <property type="gene ID" value="ENSG00000005302.19"/>
</dbReference>
<dbReference type="Ensembl" id="ENST00000482871.6">
    <molecule id="Q8N5Y2-4"/>
    <property type="protein sequence ID" value="ENSP00000498064.1"/>
    <property type="gene ID" value="ENSG00000005302.19"/>
</dbReference>
<dbReference type="Ensembl" id="ENST00000648013.1">
    <molecule id="Q8N5Y2-4"/>
    <property type="protein sequence ID" value="ENSP00000497518.1"/>
    <property type="gene ID" value="ENSG00000005302.19"/>
</dbReference>
<dbReference type="Ensembl" id="ENST00000649078.1">
    <molecule id="Q8N5Y2-4"/>
    <property type="protein sequence ID" value="ENSP00000498017.1"/>
    <property type="gene ID" value="ENSG00000005302.19"/>
</dbReference>
<dbReference type="Ensembl" id="ENST00000649271.1">
    <molecule id="Q8N5Y2-4"/>
    <property type="protein sequence ID" value="ENSP00000496967.1"/>
    <property type="gene ID" value="ENSG00000005302.19"/>
</dbReference>
<dbReference type="Ensembl" id="ENST00000649602.1">
    <molecule id="Q8N5Y2-4"/>
    <property type="protein sequence ID" value="ENSP00000498168.1"/>
    <property type="gene ID" value="ENSG00000005302.19"/>
</dbReference>
<dbReference type="Ensembl" id="ENST00000649649.1">
    <molecule id="Q8N5Y2-6"/>
    <property type="protein sequence ID" value="ENSP00000497137.1"/>
    <property type="gene ID" value="ENSG00000005302.19"/>
</dbReference>
<dbReference type="Ensembl" id="ENST00000649685.1">
    <molecule id="Q8N5Y2-6"/>
    <property type="protein sequence ID" value="ENSP00000497496.1"/>
    <property type="gene ID" value="ENSG00000005302.19"/>
</dbReference>
<dbReference type="Ensembl" id="ENST00000650215.1">
    <molecule id="Q8N5Y2-6"/>
    <property type="protein sequence ID" value="ENSP00000496944.1"/>
    <property type="gene ID" value="ENSG00000005302.19"/>
</dbReference>
<dbReference type="Ensembl" id="ENST00000650628.1">
    <molecule id="Q8N5Y2-4"/>
    <property type="protein sequence ID" value="ENSP00000496838.1"/>
    <property type="gene ID" value="ENSG00000005302.19"/>
</dbReference>
<dbReference type="GeneID" id="10943"/>
<dbReference type="KEGG" id="hsa:10943"/>
<dbReference type="MANE-Select" id="ENST00000312196.10">
    <property type="protein sequence ID" value="ENSP00000312244.4"/>
    <property type="RefSeq nucleotide sequence ID" value="NM_078629.4"/>
    <property type="RefSeq protein sequence ID" value="NP_523353.2"/>
</dbReference>
<dbReference type="UCSC" id="uc004cuv.2">
    <molecule id="Q8N5Y2-1"/>
    <property type="organism name" value="human"/>
</dbReference>
<dbReference type="AGR" id="HGNC:7370"/>
<dbReference type="CTD" id="10943"/>
<dbReference type="DisGeNET" id="10943"/>
<dbReference type="GeneCards" id="MSL3"/>
<dbReference type="HGNC" id="HGNC:7370">
    <property type="gene designation" value="MSL3"/>
</dbReference>
<dbReference type="HPA" id="ENSG00000005302">
    <property type="expression patterns" value="Low tissue specificity"/>
</dbReference>
<dbReference type="MalaCards" id="MSL3"/>
<dbReference type="MIM" id="300609">
    <property type="type" value="gene"/>
</dbReference>
<dbReference type="MIM" id="301032">
    <property type="type" value="phenotype"/>
</dbReference>
<dbReference type="neXtProt" id="NX_Q8N5Y2"/>
<dbReference type="OpenTargets" id="ENSG00000005302"/>
<dbReference type="PharmGKB" id="PA164723161"/>
<dbReference type="VEuPathDB" id="HostDB:ENSG00000005302"/>
<dbReference type="eggNOG" id="KOG3001">
    <property type="taxonomic scope" value="Eukaryota"/>
</dbReference>
<dbReference type="GeneTree" id="ENSGT00950000182965"/>
<dbReference type="HOGENOM" id="CLU_039566_5_2_1"/>
<dbReference type="InParanoid" id="Q8N5Y2"/>
<dbReference type="OMA" id="DTEYAHL"/>
<dbReference type="OrthoDB" id="10044771at2759"/>
<dbReference type="PAN-GO" id="Q8N5Y2">
    <property type="GO annotations" value="5 GO annotations based on evolutionary models"/>
</dbReference>
<dbReference type="PhylomeDB" id="Q8N5Y2"/>
<dbReference type="TreeFam" id="TF323400"/>
<dbReference type="PathwayCommons" id="Q8N5Y2"/>
<dbReference type="Reactome" id="R-HSA-3214847">
    <property type="pathway name" value="HATs acetylate histones"/>
</dbReference>
<dbReference type="SignaLink" id="Q8N5Y2"/>
<dbReference type="SIGNOR" id="Q8N5Y2"/>
<dbReference type="BioGRID-ORCS" id="10943">
    <property type="hits" value="27 hits in 784 CRISPR screens"/>
</dbReference>
<dbReference type="ChiTaRS" id="MSL3">
    <property type="organism name" value="human"/>
</dbReference>
<dbReference type="EvolutionaryTrace" id="Q8N5Y2"/>
<dbReference type="GenomeRNAi" id="10943"/>
<dbReference type="Pharos" id="Q8N5Y2">
    <property type="development level" value="Tbio"/>
</dbReference>
<dbReference type="PRO" id="PR:Q8N5Y2"/>
<dbReference type="Proteomes" id="UP000005640">
    <property type="component" value="Chromosome X"/>
</dbReference>
<dbReference type="RNAct" id="Q8N5Y2">
    <property type="molecule type" value="protein"/>
</dbReference>
<dbReference type="Bgee" id="ENSG00000005302">
    <property type="expression patterns" value="Expressed in monocyte and 193 other cell types or tissues"/>
</dbReference>
<dbReference type="ExpressionAtlas" id="Q8N5Y2">
    <property type="expression patterns" value="baseline and differential"/>
</dbReference>
<dbReference type="GO" id="GO:0072487">
    <property type="term" value="C:MSL complex"/>
    <property type="evidence" value="ECO:0000314"/>
    <property type="project" value="UniProtKB"/>
</dbReference>
<dbReference type="GO" id="GO:0035267">
    <property type="term" value="C:NuA4 histone acetyltransferase complex"/>
    <property type="evidence" value="ECO:0000318"/>
    <property type="project" value="GO_Central"/>
</dbReference>
<dbReference type="GO" id="GO:0005654">
    <property type="term" value="C:nucleoplasm"/>
    <property type="evidence" value="ECO:0000304"/>
    <property type="project" value="Reactome"/>
</dbReference>
<dbReference type="GO" id="GO:0005634">
    <property type="term" value="C:nucleus"/>
    <property type="evidence" value="ECO:0000314"/>
    <property type="project" value="UniProtKB"/>
</dbReference>
<dbReference type="GO" id="GO:0003677">
    <property type="term" value="F:DNA binding"/>
    <property type="evidence" value="ECO:0000314"/>
    <property type="project" value="UniProtKB"/>
</dbReference>
<dbReference type="GO" id="GO:0140046">
    <property type="term" value="F:histone H4K16ac reader activity"/>
    <property type="evidence" value="ECO:0000314"/>
    <property type="project" value="UniProtKB"/>
</dbReference>
<dbReference type="GO" id="GO:0140566">
    <property type="term" value="F:histone reader activity"/>
    <property type="evidence" value="ECO:0000314"/>
    <property type="project" value="UniProt"/>
</dbReference>
<dbReference type="GO" id="GO:0045893">
    <property type="term" value="P:positive regulation of DNA-templated transcription"/>
    <property type="evidence" value="ECO:0000314"/>
    <property type="project" value="UniProt"/>
</dbReference>
<dbReference type="GO" id="GO:0006355">
    <property type="term" value="P:regulation of DNA-templated transcription"/>
    <property type="evidence" value="ECO:0000315"/>
    <property type="project" value="UniProtKB"/>
</dbReference>
<dbReference type="CDD" id="cd18983">
    <property type="entry name" value="CBD_MSL3_like"/>
    <property type="match status" value="1"/>
</dbReference>
<dbReference type="DisProt" id="DP01279"/>
<dbReference type="FunFam" id="1.10.274.30:FF:000003">
    <property type="entry name" value="Male-specific lethal 3 homolog"/>
    <property type="match status" value="1"/>
</dbReference>
<dbReference type="FunFam" id="1.10.274.30:FF:000002">
    <property type="entry name" value="male-specific lethal 3 homolog"/>
    <property type="match status" value="1"/>
</dbReference>
<dbReference type="FunFam" id="2.30.30.140:FF:000042">
    <property type="entry name" value="male-specific lethal 3 homolog"/>
    <property type="match status" value="1"/>
</dbReference>
<dbReference type="Gene3D" id="2.30.30.140">
    <property type="match status" value="1"/>
</dbReference>
<dbReference type="Gene3D" id="1.10.274.30">
    <property type="entry name" value="MRG domain"/>
    <property type="match status" value="2"/>
</dbReference>
<dbReference type="InterPro" id="IPR016197">
    <property type="entry name" value="Chromo-like_dom_sf"/>
</dbReference>
<dbReference type="InterPro" id="IPR000953">
    <property type="entry name" value="Chromo/chromo_shadow_dom"/>
</dbReference>
<dbReference type="InterPro" id="IPR008676">
    <property type="entry name" value="MRG"/>
</dbReference>
<dbReference type="InterPro" id="IPR038217">
    <property type="entry name" value="MRG_C_sf"/>
</dbReference>
<dbReference type="InterPro" id="IPR026541">
    <property type="entry name" value="MRG_dom"/>
</dbReference>
<dbReference type="InterPro" id="IPR053820">
    <property type="entry name" value="MSL3_chromo-like"/>
</dbReference>
<dbReference type="PANTHER" id="PTHR10880">
    <property type="entry name" value="MORTALITY FACTOR 4-LIKE PROTEIN"/>
    <property type="match status" value="1"/>
</dbReference>
<dbReference type="PANTHER" id="PTHR10880:SF15">
    <property type="entry name" value="MSL COMPLEX SUBUNIT 3"/>
    <property type="match status" value="1"/>
</dbReference>
<dbReference type="Pfam" id="PF05712">
    <property type="entry name" value="MRG"/>
    <property type="match status" value="1"/>
</dbReference>
<dbReference type="Pfam" id="PF22732">
    <property type="entry name" value="MSL3_chromo-like"/>
    <property type="match status" value="1"/>
</dbReference>
<dbReference type="SMART" id="SM00298">
    <property type="entry name" value="CHROMO"/>
    <property type="match status" value="1"/>
</dbReference>
<dbReference type="SUPFAM" id="SSF54160">
    <property type="entry name" value="Chromo domain-like"/>
    <property type="match status" value="1"/>
</dbReference>
<dbReference type="PROSITE" id="PS51640">
    <property type="entry name" value="MRG"/>
    <property type="match status" value="1"/>
</dbReference>
<organism>
    <name type="scientific">Homo sapiens</name>
    <name type="common">Human</name>
    <dbReference type="NCBI Taxonomy" id="9606"/>
    <lineage>
        <taxon>Eukaryota</taxon>
        <taxon>Metazoa</taxon>
        <taxon>Chordata</taxon>
        <taxon>Craniata</taxon>
        <taxon>Vertebrata</taxon>
        <taxon>Euteleostomi</taxon>
        <taxon>Mammalia</taxon>
        <taxon>Eutheria</taxon>
        <taxon>Euarchontoglires</taxon>
        <taxon>Primates</taxon>
        <taxon>Haplorrhini</taxon>
        <taxon>Catarrhini</taxon>
        <taxon>Hominidae</taxon>
        <taxon>Homo</taxon>
    </lineage>
</organism>
<gene>
    <name evidence="20 22" type="primary">MSL3</name>
    <name type="synonym">MSL3L1</name>
</gene>
<evidence type="ECO:0000250" key="1">
    <source>
        <dbReference type="UniProtKB" id="Q9D1P2"/>
    </source>
</evidence>
<evidence type="ECO:0000250" key="2">
    <source>
        <dbReference type="UniProtKB" id="Q9WVG9"/>
    </source>
</evidence>
<evidence type="ECO:0000255" key="3"/>
<evidence type="ECO:0000255" key="4">
    <source>
        <dbReference type="PROSITE-ProRule" id="PRU00972"/>
    </source>
</evidence>
<evidence type="ECO:0000256" key="5">
    <source>
        <dbReference type="SAM" id="MobiDB-lite"/>
    </source>
</evidence>
<evidence type="ECO:0000269" key="6">
    <source>
    </source>
</evidence>
<evidence type="ECO:0000269" key="7">
    <source>
    </source>
</evidence>
<evidence type="ECO:0000269" key="8">
    <source>
    </source>
</evidence>
<evidence type="ECO:0000269" key="9">
    <source>
    </source>
</evidence>
<evidence type="ECO:0000269" key="10">
    <source>
    </source>
</evidence>
<evidence type="ECO:0000269" key="11">
    <source>
    </source>
</evidence>
<evidence type="ECO:0000269" key="12">
    <source>
    </source>
</evidence>
<evidence type="ECO:0000269" key="13">
    <source>
    </source>
</evidence>
<evidence type="ECO:0000269" key="14">
    <source>
    </source>
</evidence>
<evidence type="ECO:0000269" key="15">
    <source>
    </source>
</evidence>
<evidence type="ECO:0000269" key="16">
    <source>
    </source>
</evidence>
<evidence type="ECO:0000269" key="17">
    <source>
    </source>
</evidence>
<evidence type="ECO:0000303" key="18">
    <source>
    </source>
</evidence>
<evidence type="ECO:0000303" key="19">
    <source>
    </source>
</evidence>
<evidence type="ECO:0000303" key="20">
    <source>
    </source>
</evidence>
<evidence type="ECO:0000305" key="21"/>
<evidence type="ECO:0000312" key="22">
    <source>
        <dbReference type="HGNC" id="HGNC:7370"/>
    </source>
</evidence>
<evidence type="ECO:0007744" key="23">
    <source>
    </source>
</evidence>
<evidence type="ECO:0007744" key="24">
    <source>
    </source>
</evidence>
<evidence type="ECO:0007744" key="25">
    <source>
    </source>
</evidence>
<evidence type="ECO:0007744" key="26">
    <source>
    </source>
</evidence>
<evidence type="ECO:0007744" key="27">
    <source>
    </source>
</evidence>
<evidence type="ECO:0007829" key="28">
    <source>
        <dbReference type="PDB" id="2Y0N"/>
    </source>
</evidence>
<evidence type="ECO:0007829" key="29">
    <source>
        <dbReference type="PDB" id="3OA6"/>
    </source>
</evidence>
<name>MS3L1_HUMAN</name>
<protein>
    <recommendedName>
        <fullName evidence="22">MSL complex subunit 3</fullName>
    </recommendedName>
    <alternativeName>
        <fullName evidence="20">Male-specific lethal 3 homolog</fullName>
    </alternativeName>
    <alternativeName>
        <fullName>Male-specific lethal-3 homolog 1</fullName>
    </alternativeName>
    <alternativeName>
        <fullName>Male-specific lethal-3 protein-like 1</fullName>
        <shortName>MSL3-like 1</shortName>
    </alternativeName>
</protein>